<evidence type="ECO:0000250" key="1"/>
<evidence type="ECO:0000250" key="2">
    <source>
        <dbReference type="UniProtKB" id="O61715"/>
    </source>
</evidence>
<evidence type="ECO:0000255" key="3">
    <source>
        <dbReference type="PROSITE-ProRule" id="PRU00351"/>
    </source>
</evidence>
<evidence type="ECO:0000305" key="4"/>
<evidence type="ECO:0000312" key="5">
    <source>
        <dbReference type="EMBL" id="AAG50220.1"/>
    </source>
</evidence>
<evidence type="ECO:0000312" key="6">
    <source>
        <dbReference type="WormBase" id="R12E2.4b"/>
    </source>
</evidence>
<keyword id="KW-0025">Alternative splicing</keyword>
<keyword id="KW-0965">Cell junction</keyword>
<keyword id="KW-1003">Cell membrane</keyword>
<keyword id="KW-0303">Gap junction</keyword>
<keyword id="KW-0407">Ion channel</keyword>
<keyword id="KW-0406">Ion transport</keyword>
<keyword id="KW-0472">Membrane</keyword>
<keyword id="KW-1185">Reference proteome</keyword>
<keyword id="KW-0812">Transmembrane</keyword>
<keyword id="KW-1133">Transmembrane helix</keyword>
<keyword id="KW-0813">Transport</keyword>
<comment type="function">
    <text evidence="2">Structural component of the gap junctions.</text>
</comment>
<comment type="subcellular location">
    <subcellularLocation>
        <location evidence="4">Cell membrane</location>
        <topology evidence="3">Multi-pass membrane protein</topology>
    </subcellularLocation>
    <subcellularLocation>
        <location evidence="1">Cell junction</location>
        <location evidence="1">Gap junction</location>
    </subcellularLocation>
</comment>
<comment type="alternative products">
    <event type="alternative splicing"/>
    <isoform>
        <id>O61788-1</id>
        <name>a</name>
        <sequence type="displayed"/>
    </isoform>
    <isoform>
        <id>O61788-2</id>
        <name>b</name>
        <sequence type="described" ref="VSP_016615 VSP_016616"/>
    </isoform>
</comment>
<comment type="similarity">
    <text evidence="3">Belongs to the pannexin family.</text>
</comment>
<dbReference type="EMBL" id="FO080613">
    <property type="protein sequence ID" value="CCD65170.1"/>
    <property type="molecule type" value="Genomic_DNA"/>
</dbReference>
<dbReference type="EMBL" id="FO080613">
    <property type="protein sequence ID" value="CCD65171.1"/>
    <property type="molecule type" value="Genomic_DNA"/>
</dbReference>
<dbReference type="EMBL" id="AF303262">
    <property type="protein sequence ID" value="AAG50220.1"/>
    <property type="molecule type" value="mRNA"/>
</dbReference>
<dbReference type="PIR" id="T33092">
    <property type="entry name" value="T33092"/>
</dbReference>
<dbReference type="RefSeq" id="NP_001021592.1">
    <molecule id="O61788-2"/>
    <property type="nucleotide sequence ID" value="NM_001026421.4"/>
</dbReference>
<dbReference type="RefSeq" id="NP_491315.1">
    <molecule id="O61788-1"/>
    <property type="nucleotide sequence ID" value="NM_058914.5"/>
</dbReference>
<dbReference type="SMR" id="O61788"/>
<dbReference type="BioGRID" id="37477">
    <property type="interactions" value="1"/>
</dbReference>
<dbReference type="FunCoup" id="O61788">
    <property type="interactions" value="201"/>
</dbReference>
<dbReference type="STRING" id="6239.R12E2.4a.1"/>
<dbReference type="PaxDb" id="6239-R12E2.4a"/>
<dbReference type="PeptideAtlas" id="O61788"/>
<dbReference type="EnsemblMetazoa" id="R12E2.4a.1">
    <molecule id="O61788-1"/>
    <property type="protein sequence ID" value="R12E2.4a.1"/>
    <property type="gene ID" value="WBGene00002139"/>
</dbReference>
<dbReference type="EnsemblMetazoa" id="R12E2.4b.1">
    <molecule id="O61788-2"/>
    <property type="protein sequence ID" value="R12E2.4b.1"/>
    <property type="gene ID" value="WBGene00002139"/>
</dbReference>
<dbReference type="GeneID" id="172006"/>
<dbReference type="KEGG" id="cel:CELE_R12E2.4"/>
<dbReference type="UCSC" id="R12E2.4b">
    <molecule id="O61788-1"/>
    <property type="organism name" value="c. elegans"/>
</dbReference>
<dbReference type="AGR" id="WB:WBGene00002139"/>
<dbReference type="CTD" id="172006"/>
<dbReference type="WormBase" id="R12E2.4a">
    <molecule id="O61788-1"/>
    <property type="protein sequence ID" value="CE18136"/>
    <property type="gene ID" value="WBGene00002139"/>
    <property type="gene designation" value="inx-17"/>
</dbReference>
<dbReference type="WormBase" id="R12E2.4b">
    <molecule id="O61788-2"/>
    <property type="protein sequence ID" value="CE38537"/>
    <property type="gene ID" value="WBGene00002139"/>
    <property type="gene designation" value="inx-17"/>
</dbReference>
<dbReference type="eggNOG" id="ENOG502QWRS">
    <property type="taxonomic scope" value="Eukaryota"/>
</dbReference>
<dbReference type="HOGENOM" id="CLU_035763_0_0_1"/>
<dbReference type="InParanoid" id="O61788"/>
<dbReference type="OMA" id="HRAVKIN"/>
<dbReference type="OrthoDB" id="5867527at2759"/>
<dbReference type="PhylomeDB" id="O61788"/>
<dbReference type="PRO" id="PR:O61788"/>
<dbReference type="Proteomes" id="UP000001940">
    <property type="component" value="Chromosome I"/>
</dbReference>
<dbReference type="Bgee" id="WBGene00002139">
    <property type="expression patterns" value="Expressed in larva and 3 other cell types or tissues"/>
</dbReference>
<dbReference type="GO" id="GO:0005921">
    <property type="term" value="C:gap junction"/>
    <property type="evidence" value="ECO:0000250"/>
    <property type="project" value="UniProtKB"/>
</dbReference>
<dbReference type="GO" id="GO:0005886">
    <property type="term" value="C:plasma membrane"/>
    <property type="evidence" value="ECO:0000250"/>
    <property type="project" value="UniProtKB"/>
</dbReference>
<dbReference type="GO" id="GO:0005243">
    <property type="term" value="F:gap junction channel activity"/>
    <property type="evidence" value="ECO:0000250"/>
    <property type="project" value="UniProtKB"/>
</dbReference>
<dbReference type="GO" id="GO:0055077">
    <property type="term" value="F:gap junction hemi-channel activity"/>
    <property type="evidence" value="ECO:0000250"/>
    <property type="project" value="UniProtKB"/>
</dbReference>
<dbReference type="GO" id="GO:0034220">
    <property type="term" value="P:monoatomic ion transmembrane transport"/>
    <property type="evidence" value="ECO:0007669"/>
    <property type="project" value="UniProtKB-KW"/>
</dbReference>
<dbReference type="InterPro" id="IPR000990">
    <property type="entry name" value="Innexin"/>
</dbReference>
<dbReference type="PANTHER" id="PTHR11893">
    <property type="entry name" value="INNEXIN"/>
    <property type="match status" value="1"/>
</dbReference>
<dbReference type="PANTHER" id="PTHR11893:SF27">
    <property type="entry name" value="INNEXIN-17"/>
    <property type="match status" value="1"/>
</dbReference>
<dbReference type="Pfam" id="PF00876">
    <property type="entry name" value="Innexin"/>
    <property type="match status" value="1"/>
</dbReference>
<dbReference type="PRINTS" id="PR01262">
    <property type="entry name" value="INNEXIN"/>
</dbReference>
<dbReference type="PROSITE" id="PS51013">
    <property type="entry name" value="PANNEXIN"/>
    <property type="match status" value="1"/>
</dbReference>
<organism>
    <name type="scientific">Caenorhabditis elegans</name>
    <dbReference type="NCBI Taxonomy" id="6239"/>
    <lineage>
        <taxon>Eukaryota</taxon>
        <taxon>Metazoa</taxon>
        <taxon>Ecdysozoa</taxon>
        <taxon>Nematoda</taxon>
        <taxon>Chromadorea</taxon>
        <taxon>Rhabditida</taxon>
        <taxon>Rhabditina</taxon>
        <taxon>Rhabditomorpha</taxon>
        <taxon>Rhabditoidea</taxon>
        <taxon>Rhabditidae</taxon>
        <taxon>Peloderinae</taxon>
        <taxon>Caenorhabditis</taxon>
    </lineage>
</organism>
<reference key="1">
    <citation type="journal article" date="1998" name="Science">
        <title>Genome sequence of the nematode C. elegans: a platform for investigating biology.</title>
        <authorList>
            <consortium name="The C. elegans sequencing consortium"/>
        </authorList>
    </citation>
    <scope>NUCLEOTIDE SEQUENCE [LARGE SCALE GENOMIC DNA]</scope>
    <scope>ALTERNATIVE SPLICING</scope>
    <source>
        <strain>Bristol N2</strain>
    </source>
</reference>
<reference evidence="4 5" key="2">
    <citation type="submission" date="2000-08" db="EMBL/GenBank/DDBJ databases">
        <title>The Caenorhabditis elegans transcriptome project, a complementary view of the genome.</title>
        <authorList>
            <person name="Kohara Y."/>
            <person name="Shin-i T."/>
            <person name="Suzuki Y."/>
            <person name="Sugano S."/>
            <person name="Potdevin M."/>
            <person name="Thierry-Mieg Y."/>
            <person name="Thierry-Mieg D."/>
            <person name="Thierry-Mieg J."/>
        </authorList>
    </citation>
    <scope>NUCLEOTIDE SEQUENCE [LARGE SCALE MRNA] (ISOFORM A)</scope>
    <source>
        <strain>Bristol N2</strain>
    </source>
</reference>
<gene>
    <name evidence="6" type="primary">inx-17</name>
    <name type="synonym">opu-17</name>
    <name type="ORF">R12E2.4</name>
</gene>
<proteinExistence type="evidence at transcript level"/>
<sequence length="362" mass="42100">MKIDTGFYSKTITPTYDSDAIDRLRYYFTVFLLTSSAFFIMAKQYVGQSIQCWAPKQFKGGWEEYAESYCLIENTYYVHMNNSNLPGPAIRENKELKYYQWVPFILFGLAVVIYIPRVIWNALQSLIGINISIVTSNLRKVAKSGFTSENPDIEKKKKEMQCKKKATSRQVDGEFWGSRLTTCILATKFLATILIFISMGFLDYFMGLGPMYGWTITKDILQGRQWQESGSFPRVTFCDFQVRELGYVNNWSLQCVLMVNMFNEKLFIALWWWYALLAILSIFDIFRVLFRFTIHHQISFITRILACTGDSAISATEVGEFNRKVLRIDGINLTHLVYANATIFEAADFVRPMWEQFKENQN</sequence>
<name>INX17_CAEEL</name>
<accession>O61788</accession>
<accession>Q2Z1N8</accession>
<accession>Q86S32</accession>
<feature type="chain" id="PRO_0000208516" description="Innexin-17">
    <location>
        <begin position="1"/>
        <end position="362"/>
    </location>
</feature>
<feature type="transmembrane region" description="Helical" evidence="3">
    <location>
        <begin position="27"/>
        <end position="47"/>
    </location>
</feature>
<feature type="transmembrane region" description="Helical" evidence="3">
    <location>
        <begin position="101"/>
        <end position="121"/>
    </location>
</feature>
<feature type="transmembrane region" description="Helical" evidence="3">
    <location>
        <begin position="189"/>
        <end position="209"/>
    </location>
</feature>
<feature type="transmembrane region" description="Helical" evidence="3">
    <location>
        <begin position="266"/>
        <end position="286"/>
    </location>
</feature>
<feature type="splice variant" id="VSP_016615" description="In isoform b." evidence="4">
    <original>MFNEKL</original>
    <variation>IRNFNS</variation>
    <location>
        <begin position="261"/>
        <end position="266"/>
    </location>
</feature>
<feature type="splice variant" id="VSP_016616" description="In isoform b." evidence="4">
    <location>
        <begin position="267"/>
        <end position="362"/>
    </location>
</feature>
<protein>
    <recommendedName>
        <fullName>Innexin-17</fullName>
    </recommendedName>
    <alternativeName>
        <fullName>Gap junction innexin</fullName>
    </alternativeName>
    <alternativeName>
        <fullName>Protein opu-17</fullName>
    </alternativeName>
</protein>